<dbReference type="EMBL" id="AJ242777">
    <property type="protein sequence ID" value="CAB44239.1"/>
    <property type="molecule type" value="mRNA"/>
</dbReference>
<dbReference type="EMBL" id="AJ242778">
    <property type="protein sequence ID" value="CAB44240.1"/>
    <property type="molecule type" value="mRNA"/>
</dbReference>
<dbReference type="EMBL" id="BC008186">
    <property type="protein sequence ID" value="AAH08186.1"/>
    <property type="molecule type" value="mRNA"/>
</dbReference>
<dbReference type="EMBL" id="BC008665">
    <property type="protein sequence ID" value="AAH08665.1"/>
    <property type="molecule type" value="mRNA"/>
</dbReference>
<dbReference type="EMBL" id="AX011241">
    <property type="protein sequence ID" value="CAC07546.1"/>
    <property type="molecule type" value="Unassigned_DNA"/>
</dbReference>
<dbReference type="EMBL" id="AY012159">
    <property type="protein sequence ID" value="AAG42155.2"/>
    <property type="molecule type" value="mRNA"/>
</dbReference>
<dbReference type="CCDS" id="CCDS24704.1">
    <molecule id="Q9WUU8-1"/>
</dbReference>
<dbReference type="CCDS" id="CCDS56769.1">
    <molecule id="Q9WUU8-2"/>
</dbReference>
<dbReference type="CCDS" id="CCDS70188.1">
    <molecule id="Q9WUU8-3"/>
</dbReference>
<dbReference type="RefSeq" id="NP_001186205.1">
    <molecule id="Q9WUU8-2"/>
    <property type="nucleotide sequence ID" value="NM_001199276.2"/>
</dbReference>
<dbReference type="RefSeq" id="NP_001258384.1">
    <molecule id="Q9WUU8-2"/>
    <property type="nucleotide sequence ID" value="NM_001271455.1"/>
</dbReference>
<dbReference type="RefSeq" id="XP_006533910.1">
    <molecule id="Q9WUU8-2"/>
    <property type="nucleotide sequence ID" value="XM_006533847.5"/>
</dbReference>
<dbReference type="RefSeq" id="XP_011247465.1">
    <molecule id="Q9WUU8-2"/>
    <property type="nucleotide sequence ID" value="XM_011249163.4"/>
</dbReference>
<dbReference type="PDB" id="6N5M">
    <property type="method" value="X-ray"/>
    <property type="resolution" value="3.01 A"/>
    <property type="chains" value="B/D=463-532"/>
</dbReference>
<dbReference type="PDB" id="6N6R">
    <property type="method" value="X-ray"/>
    <property type="resolution" value="1.95 A"/>
    <property type="chains" value="B/D=463-532"/>
</dbReference>
<dbReference type="PDB" id="6N6S">
    <property type="method" value="X-ray"/>
    <property type="resolution" value="3.00 A"/>
    <property type="chains" value="A/B/C/D=463-532"/>
</dbReference>
<dbReference type="PDBsum" id="6N5M"/>
<dbReference type="PDBsum" id="6N6R"/>
<dbReference type="PDBsum" id="6N6S"/>
<dbReference type="SMR" id="Q9WUU8"/>
<dbReference type="BioGRID" id="208329">
    <property type="interactions" value="7"/>
</dbReference>
<dbReference type="DIP" id="DIP-59199N"/>
<dbReference type="FunCoup" id="Q9WUU8">
    <property type="interactions" value="1717"/>
</dbReference>
<dbReference type="IntAct" id="Q9WUU8">
    <property type="interactions" value="6"/>
</dbReference>
<dbReference type="STRING" id="10090.ENSMUSP00000099792"/>
<dbReference type="GlyGen" id="Q9WUU8">
    <property type="glycosylation" value="8 sites, 1 N-linked glycan (1 site), 1 O-linked glycan (7 sites)"/>
</dbReference>
<dbReference type="iPTMnet" id="Q9WUU8"/>
<dbReference type="PhosphoSitePlus" id="Q9WUU8"/>
<dbReference type="PaxDb" id="10090-ENSMUSP00000018482"/>
<dbReference type="ProteomicsDB" id="258793">
    <molecule id="Q9WUU8-1"/>
</dbReference>
<dbReference type="ProteomicsDB" id="258794">
    <molecule id="Q9WUU8-2"/>
</dbReference>
<dbReference type="ProteomicsDB" id="258795">
    <molecule id="Q9WUU8-3"/>
</dbReference>
<dbReference type="Pumba" id="Q9WUU8"/>
<dbReference type="Antibodypedia" id="28121">
    <property type="antibodies" value="299 antibodies from 28 providers"/>
</dbReference>
<dbReference type="DNASU" id="57783"/>
<dbReference type="Ensembl" id="ENSMUST00000108885.8">
    <molecule id="Q9WUU8-2"/>
    <property type="protein sequence ID" value="ENSMUSP00000104513.2"/>
    <property type="gene ID" value="ENSMUSG00000020400.18"/>
</dbReference>
<dbReference type="Ensembl" id="ENSMUST00000108886.8">
    <molecule id="Q9WUU8-2"/>
    <property type="protein sequence ID" value="ENSMUSP00000104514.2"/>
    <property type="gene ID" value="ENSMUSG00000020400.18"/>
</dbReference>
<dbReference type="GeneID" id="57783"/>
<dbReference type="KEGG" id="mmu:57783"/>
<dbReference type="UCSC" id="uc007iyn.2">
    <molecule id="Q9WUU8-1"/>
    <property type="organism name" value="mouse"/>
</dbReference>
<dbReference type="AGR" id="MGI:1926194"/>
<dbReference type="CTD" id="10318"/>
<dbReference type="MGI" id="MGI:1926194">
    <property type="gene designation" value="Tnip1"/>
</dbReference>
<dbReference type="VEuPathDB" id="HostDB:ENSMUSG00000020400"/>
<dbReference type="eggNOG" id="ENOG502QPYT">
    <property type="taxonomic scope" value="Eukaryota"/>
</dbReference>
<dbReference type="GeneTree" id="ENSGT00510000046908"/>
<dbReference type="InParanoid" id="Q9WUU8"/>
<dbReference type="OrthoDB" id="10059994at2759"/>
<dbReference type="PhylomeDB" id="Q9WUU8"/>
<dbReference type="Reactome" id="R-MMU-5689896">
    <property type="pathway name" value="Ovarian tumor domain proteases"/>
</dbReference>
<dbReference type="BioGRID-ORCS" id="57783">
    <property type="hits" value="13 hits in 78 CRISPR screens"/>
</dbReference>
<dbReference type="ChiTaRS" id="Tnip1">
    <property type="organism name" value="mouse"/>
</dbReference>
<dbReference type="PRO" id="PR:Q9WUU8"/>
<dbReference type="Proteomes" id="UP000000589">
    <property type="component" value="Chromosome 11"/>
</dbReference>
<dbReference type="RNAct" id="Q9WUU8">
    <property type="molecule type" value="protein"/>
</dbReference>
<dbReference type="Bgee" id="ENSMUSG00000020400">
    <property type="expression patterns" value="Expressed in small intestine Peyer's patch and 262 other cell types or tissues"/>
</dbReference>
<dbReference type="ExpressionAtlas" id="Q9WUU8">
    <property type="expression patterns" value="baseline and differential"/>
</dbReference>
<dbReference type="GO" id="GO:0005737">
    <property type="term" value="C:cytoplasm"/>
    <property type="evidence" value="ECO:0000314"/>
    <property type="project" value="MGI"/>
</dbReference>
<dbReference type="GO" id="GO:0005634">
    <property type="term" value="C:nucleus"/>
    <property type="evidence" value="ECO:0007669"/>
    <property type="project" value="UniProtKB-SubCell"/>
</dbReference>
<dbReference type="GO" id="GO:0051019">
    <property type="term" value="F:mitogen-activated protein kinase binding"/>
    <property type="evidence" value="ECO:0000250"/>
    <property type="project" value="UniProtKB"/>
</dbReference>
<dbReference type="GO" id="GO:0031593">
    <property type="term" value="F:polyubiquitin modification-dependent protein binding"/>
    <property type="evidence" value="ECO:0000314"/>
    <property type="project" value="UniProtKB"/>
</dbReference>
<dbReference type="GO" id="GO:0006954">
    <property type="term" value="P:inflammatory response"/>
    <property type="evidence" value="ECO:0007669"/>
    <property type="project" value="UniProtKB-KW"/>
</dbReference>
<dbReference type="GO" id="GO:0007159">
    <property type="term" value="P:leukocyte cell-cell adhesion"/>
    <property type="evidence" value="ECO:0000250"/>
    <property type="project" value="UniProtKB"/>
</dbReference>
<dbReference type="GO" id="GO:0002755">
    <property type="term" value="P:MyD88-dependent toll-like receptor signaling pathway"/>
    <property type="evidence" value="ECO:0000314"/>
    <property type="project" value="UniProtKB"/>
</dbReference>
<dbReference type="GO" id="GO:0043124">
    <property type="term" value="P:negative regulation of canonical NF-kappaB signal transduction"/>
    <property type="evidence" value="ECO:0000314"/>
    <property type="project" value="UniProtKB"/>
</dbReference>
<dbReference type="GO" id="GO:0070373">
    <property type="term" value="P:negative regulation of ERK1 and ERK2 cascade"/>
    <property type="evidence" value="ECO:0000250"/>
    <property type="project" value="UniProtKB"/>
</dbReference>
<dbReference type="GO" id="GO:0050729">
    <property type="term" value="P:positive regulation of inflammatory response"/>
    <property type="evidence" value="ECO:0000315"/>
    <property type="project" value="UniProtKB"/>
</dbReference>
<dbReference type="GO" id="GO:1903003">
    <property type="term" value="P:positive regulation of protein deubiquitination"/>
    <property type="evidence" value="ECO:0000250"/>
    <property type="project" value="UniProtKB"/>
</dbReference>
<dbReference type="GO" id="GO:0045944">
    <property type="term" value="P:positive regulation of transcription by RNA polymerase II"/>
    <property type="evidence" value="ECO:0000315"/>
    <property type="project" value="UniProtKB"/>
</dbReference>
<dbReference type="FunFam" id="1.20.5.990:FF:000001">
    <property type="entry name" value="TNFAIP3 interacting protein 1"/>
    <property type="match status" value="1"/>
</dbReference>
<dbReference type="Gene3D" id="1.20.5.990">
    <property type="entry name" value="Nemo cc2-lz domain - 1d5 darpin complex"/>
    <property type="match status" value="1"/>
</dbReference>
<dbReference type="InterPro" id="IPR032419">
    <property type="entry name" value="CC2-LZ_dom"/>
</dbReference>
<dbReference type="PANTHER" id="PTHR31882:SF3">
    <property type="entry name" value="TNFAIP3-INTERACTING PROTEIN 1"/>
    <property type="match status" value="1"/>
</dbReference>
<dbReference type="PANTHER" id="PTHR31882">
    <property type="entry name" value="TNFAIP3-INTERACTING PROTEIN COILED COIL FAMILY MEMBER"/>
    <property type="match status" value="1"/>
</dbReference>
<dbReference type="Pfam" id="PF16516">
    <property type="entry name" value="CC2-LZ"/>
    <property type="match status" value="1"/>
</dbReference>
<comment type="function">
    <text evidence="2 6 8 9">Inhibits NF-kappa-B activation and TNF-induced NF-kappa-B-dependent gene expression by regulating TAX1BP1 and A20/TNFAIP3-mediated deubiquitination of IKBKG; proposed to link A20/TNFAIP3 to ubiquitinated IKBKG (By similarity). Involved in regulation of EGF-induced ERK1/ERK2 signaling pathway; blocks MAPK3/MAPK1 nuclear translocation and MAPK1-dependent transcription. Increases cell surface CD4(T4) antigen expression. Involved in the anti-inflammatory response of macrophages and positively regulates TLR-induced activation of CEBPB. Involved in the prevention of autoimmunity; this function implicates binding to polyubiquitin. Involved in leukocyte integrin activation during inflammation; this function is mediated by association with SELPLG and dependent on phosphorylation by SRC-family kinases.</text>
</comment>
<comment type="subunit">
    <text evidence="2 5 6 7 9">Interacts with TNFAIP3 and IKBKG (polyubiquitinated); facilitates TNFAIP3-mediated de-ubiquitination of NEMO/IKBKG. Interacts with polyubiquitin. Interacts with MAPK1, SELPLG and PIK3CD. Interacts with IRAK1 (polyubiquitinated). Interacts with MYD88; the interaction is indicative for participation in an activated TLR-signaling complex. Interacts with TAX1BP1 (By similarity).</text>
</comment>
<comment type="interaction">
    <interactant intactId="EBI-6126152">
        <id>Q9WUU8</id>
    </interactant>
    <interactant intactId="EBI-525108">
        <id>P22366</id>
        <label>Myd88</label>
    </interactant>
    <organismsDiffer>false</organismsDiffer>
    <experiments>3</experiments>
</comment>
<comment type="interaction">
    <interactant intactId="EBI-6126152">
        <id>Q9WUU8</id>
    </interactant>
    <interactant intactId="EBI-646595">
        <id>Q60769</id>
        <label>Tnfaip3</label>
    </interactant>
    <organismsDiffer>false</organismsDiffer>
    <experiments>4</experiments>
</comment>
<comment type="subcellular location">
    <subcellularLocation>
        <location evidence="1">Cytoplasm</location>
    </subcellularLocation>
    <subcellularLocation>
        <location evidence="1">Nucleus</location>
    </subcellularLocation>
    <text evidence="1">Shuttles between the nucleus and cytoplasm in a CRM1-dependent manner.</text>
</comment>
<comment type="alternative products">
    <event type="alternative splicing"/>
    <isoform>
        <id>Q9WUU8-1</id>
        <name>1</name>
        <name>ABINl</name>
        <sequence type="displayed"/>
    </isoform>
    <isoform>
        <id>Q9WUU8-2</id>
        <name>2</name>
        <name>ABINs</name>
        <sequence type="described" ref="VSP_003914"/>
    </isoform>
    <isoform>
        <id>Q9WUU8-3</id>
        <name>3</name>
        <sequence type="described" ref="VSP_003915"/>
    </isoform>
</comment>
<comment type="tissue specificity">
    <text>Ubiquitous. Abundant in heart and skeletal muscle and expressed at lower levels in thymus, liver, kidney, brain and intestinal tract.</text>
</comment>
<comment type="PTM">
    <text evidence="1">Phosphorylation at Tyr-565 by SRC-family kinases recruits phosphoinositide-3-kinase (PI3K) PIK3CD:p85 heterodimer which results in integrin activation and leukocyte adhesion to activated endothelium during inflammation.</text>
</comment>
<comment type="disruption phenotype">
    <text evidence="9">Embryonic lethal. Mice develop an inflammatory disease with characteristics of human systemic lupus erythematosus (SLE), including the appearance of immature granulocytes in the peripheral blood and development of autoreactive antibodies and glomerulonephrititis.</text>
</comment>
<accession>Q9WUU8</accession>
<accession>Q922A9</accession>
<accession>Q922F7</accession>
<accession>Q9EPP8</accession>
<accession>Q9R0X3</accession>
<name>TNIP1_MOUSE</name>
<reference key="1">
    <citation type="journal article" date="1999" name="J. Cell Biol.">
        <title>The zinc finger protein A20 inhibits TNF-induced NF-B-dependent gene expression by interfering with an RIP- or TRAF2-mediated transactivation signal and directly binds to a novel NF-B-inhibiting protein ABIN.</title>
        <authorList>
            <person name="Heyninck K."/>
            <person name="De Valck D."/>
            <person name="Vanden Berghe W."/>
            <person name="Van Criekinge W."/>
            <person name="Contreras R."/>
            <person name="Fiers W."/>
            <person name="Haegeman G."/>
            <person name="Beyaert R."/>
        </authorList>
    </citation>
    <scope>NUCLEOTIDE SEQUENCE [MRNA] (ISOFORMS 1 AND 2)</scope>
</reference>
<reference key="2">
    <citation type="journal article" date="2004" name="Genome Res.">
        <title>The status, quality, and expansion of the NIH full-length cDNA project: the Mammalian Gene Collection (MGC).</title>
        <authorList>
            <consortium name="The MGC Project Team"/>
        </authorList>
    </citation>
    <scope>NUCLEOTIDE SEQUENCE [LARGE SCALE MRNA] (ISOFORMS 1 AND 3)</scope>
    <source>
        <tissue>Mammary tumor</tissue>
    </source>
</reference>
<reference key="3">
    <citation type="journal article" date="2000" name="J. Virol.">
        <title>A human nuclear shuttling protein that interacts with human immunodeficiency virus type 1 matrix is packaged into virions.</title>
        <authorList>
            <person name="Gupta K."/>
            <person name="Ott D."/>
            <person name="Hope T.J."/>
            <person name="Siliciano R.F."/>
            <person name="Boeke J.D."/>
        </authorList>
    </citation>
    <scope>NUCLEOTIDE SEQUENCE [MRNA] OF 97-647 (ISOFORM 3)</scope>
</reference>
<reference key="4">
    <citation type="journal article" date="2001" name="FEBS Lett.">
        <title>Functional redundancy of the zinc fingers of A20 for inhibition of NF-kappaB activation and protein-protein interactions.</title>
        <authorList>
            <person name="Klinkenberg M."/>
            <person name="Van Huffel S."/>
            <person name="Heyninck K."/>
            <person name="Beyaert R."/>
        </authorList>
    </citation>
    <scope>INTERACTION WITH TNFAIP3</scope>
</reference>
<reference key="5">
    <citation type="journal article" date="2003" name="FEBS Lett.">
        <title>Structure-function analysis of the A20-binding inhibitor of NF-kappa B activation, ABIN-1.</title>
        <authorList>
            <person name="Heyninck K."/>
            <person name="Kreike M.M."/>
            <person name="Beyaert R."/>
        </authorList>
    </citation>
    <scope>FUNCTION</scope>
    <scope>INTERACTION WITH TNFAIP3</scope>
    <scope>MUTAGENESIS OF 477-GLN-GLN-478; 485-ASP-PHE-486 AND 493-ARG-GLU-494</scope>
</reference>
<reference key="6">
    <citation type="journal article" date="2008" name="Oncogene">
        <title>Ubiquitin binding mediates the NF-kappaB inhibitory potential of ABIN proteins.</title>
        <authorList>
            <person name="Wagner S."/>
            <person name="Carpentier I."/>
            <person name="Rogov V."/>
            <person name="Kreike M."/>
            <person name="Ikeda F."/>
            <person name="Lohr F."/>
            <person name="Wu C.J."/>
            <person name="Ashwell J.D."/>
            <person name="Dotsch V."/>
            <person name="Dikic I."/>
            <person name="Beyaert R."/>
        </authorList>
    </citation>
    <scope>INTERACTION WITH IKBKG</scope>
    <scope>UBIQUITIN-BINDING</scope>
    <scope>MUTAGENESIS OF 485-ASP-PHE-486 AND 489-GLU-ARG-490</scope>
</reference>
<reference key="7">
    <citation type="journal article" date="2011" name="J. Exp. Med.">
        <title>Polyubiquitin binding to ABIN1 is required to prevent autoimmunity.</title>
        <authorList>
            <person name="Nanda S.K."/>
            <person name="Venigalla R.K."/>
            <person name="Ordureau A."/>
            <person name="Patterson-Kane J.C."/>
            <person name="Powell D.W."/>
            <person name="Toth R."/>
            <person name="Arthur J.S."/>
            <person name="Cohen P."/>
        </authorList>
    </citation>
    <scope>FUNCTION</scope>
    <scope>UBIQUITIN-BINDING</scope>
    <scope>MUTAGENESIS OF ASP-485</scope>
</reference>
<reference key="8">
    <citation type="journal article" date="2011" name="Proc. Natl. Acad. Sci. U.S.A.">
        <title>A20-binding inhibitor of NF-kappaB (ABIN1) controls Toll-like receptor-mediated CCAAT/enhancer-binding protein beta activation and protects from inflammatory disease.</title>
        <authorList>
            <person name="Zhou J."/>
            <person name="Wu R."/>
            <person name="High A.A."/>
            <person name="Slaughter C.A."/>
            <person name="Finkelstein D."/>
            <person name="Rehg J.E."/>
            <person name="Redecke V."/>
            <person name="Hacker H."/>
        </authorList>
    </citation>
    <scope>FUNCTION</scope>
    <scope>INTERACTION WITH MYD88</scope>
    <scope>DISRUPTION PHENOTYPE</scope>
</reference>
<reference key="9">
    <citation type="journal article" date="2014" name="Mol. Cell. Proteomics">
        <title>Immunoaffinity enrichment and mass spectrometry analysis of protein methylation.</title>
        <authorList>
            <person name="Guo A."/>
            <person name="Gu H."/>
            <person name="Zhou J."/>
            <person name="Mulhern D."/>
            <person name="Wang Y."/>
            <person name="Lee K.A."/>
            <person name="Yang V."/>
            <person name="Aguiar M."/>
            <person name="Kornhauser J."/>
            <person name="Jia X."/>
            <person name="Ren J."/>
            <person name="Beausoleil S.A."/>
            <person name="Silva J.C."/>
            <person name="Vemulapalli V."/>
            <person name="Bedford M.T."/>
            <person name="Comb M.J."/>
        </authorList>
    </citation>
    <scope>METHYLATION [LARGE SCALE ANALYSIS] AT ARG-584</scope>
    <scope>IDENTIFICATION BY MASS SPECTROMETRY [LARGE SCALE ANALYSIS]</scope>
    <source>
        <tissue>Brain</tissue>
        <tissue>Embryo</tissue>
    </source>
</reference>
<organism>
    <name type="scientific">Mus musculus</name>
    <name type="common">Mouse</name>
    <dbReference type="NCBI Taxonomy" id="10090"/>
    <lineage>
        <taxon>Eukaryota</taxon>
        <taxon>Metazoa</taxon>
        <taxon>Chordata</taxon>
        <taxon>Craniata</taxon>
        <taxon>Vertebrata</taxon>
        <taxon>Euteleostomi</taxon>
        <taxon>Mammalia</taxon>
        <taxon>Eutheria</taxon>
        <taxon>Euarchontoglires</taxon>
        <taxon>Glires</taxon>
        <taxon>Rodentia</taxon>
        <taxon>Myomorpha</taxon>
        <taxon>Muroidea</taxon>
        <taxon>Muridae</taxon>
        <taxon>Murinae</taxon>
        <taxon>Mus</taxon>
        <taxon>Mus</taxon>
    </lineage>
</organism>
<keyword id="KW-0002">3D-structure</keyword>
<keyword id="KW-0025">Alternative splicing</keyword>
<keyword id="KW-0175">Coiled coil</keyword>
<keyword id="KW-0963">Cytoplasm</keyword>
<keyword id="KW-0395">Inflammatory response</keyword>
<keyword id="KW-0488">Methylation</keyword>
<keyword id="KW-0539">Nucleus</keyword>
<keyword id="KW-0597">Phosphoprotein</keyword>
<keyword id="KW-1185">Reference proteome</keyword>
<sequence>MEGRGPYRIYDPGGSTPLGEVSAAFERLVEENTRLKGKMQGIKMLGELLEESQMEASRLRQKAEELVKDSELSPPTSAPSLVSFDDLAELTGQDTKVQVHPATSTAATTTATATTGNSMEKPEPASKSPSNGASSDFEVVPTEEQNSPETGSHPTNMMDLGPPPPEDSNLKLHLQRLETTLSVCAEEPDHSQLFTHLGRMALEFNRLASKVHKNEQRTSILQTLCEQLRQENEALKAKLDKGLEQRDLAAERLREENTELKKLLMNSSCKEGLCGQPSSPKPEGAGKKGVAGQQQASVMASKVPEAGAFGAAEKKVKLLEQQRMELLEVNKQWDQHFRSMKQQYEQKITELRQKLVDLQKQVTELEAEREQKQRDFDRKLLLAKSKIEMEETDKEQLTAEAKELRQKVRYLQDQLSPLTRQREYQEKEIQRLNKALEEALSIQASPSSPPAAFGSPEGVGGHLRKQELVTQNELLKQQVKIFEEDFQRERSDRERMNEEKEELKKQVEKLQAQVTLTNAQLKTLKEEEKAKEALKQQKRKAKASGERYHMEPHPEHVCGAYPYAYPPMPAMVPHHAYKDWSQIRYPPPPVPMEHPPPHPNSRLFHLPEYTWRPPCAGIRNQSSQVMDPPPDRPAEPESADNDCDGPQ</sequence>
<evidence type="ECO:0000250" key="1"/>
<evidence type="ECO:0000250" key="2">
    <source>
        <dbReference type="UniProtKB" id="Q15025"/>
    </source>
</evidence>
<evidence type="ECO:0000255" key="3"/>
<evidence type="ECO:0000256" key="4">
    <source>
        <dbReference type="SAM" id="MobiDB-lite"/>
    </source>
</evidence>
<evidence type="ECO:0000269" key="5">
    <source>
    </source>
</evidence>
<evidence type="ECO:0000269" key="6">
    <source>
    </source>
</evidence>
<evidence type="ECO:0000269" key="7">
    <source>
    </source>
</evidence>
<evidence type="ECO:0000269" key="8">
    <source>
    </source>
</evidence>
<evidence type="ECO:0000269" key="9">
    <source>
    </source>
</evidence>
<evidence type="ECO:0000303" key="10">
    <source>
    </source>
</evidence>
<evidence type="ECO:0000303" key="11">
    <source>
    </source>
</evidence>
<evidence type="ECO:0000303" key="12">
    <source>
    </source>
</evidence>
<evidence type="ECO:0000305" key="13"/>
<evidence type="ECO:0007744" key="14">
    <source>
    </source>
</evidence>
<evidence type="ECO:0007829" key="15">
    <source>
        <dbReference type="PDB" id="6N6R"/>
    </source>
</evidence>
<protein>
    <recommendedName>
        <fullName>TNFAIP3-interacting protein 1</fullName>
    </recommendedName>
    <alternativeName>
        <fullName>A20-binding inhibitor of NF-kappa-B activation 1</fullName>
        <shortName>ABIN</shortName>
        <shortName>ABIN-1</shortName>
    </alternativeName>
    <alternativeName>
        <fullName>Nef-associated factor 1</fullName>
        <shortName>Naf1</shortName>
    </alternativeName>
    <alternativeName>
        <fullName>Virion-associated nuclear shuttling protein</fullName>
        <shortName>VAN</shortName>
        <shortName>mVAN</shortName>
    </alternativeName>
</protein>
<proteinExistence type="evidence at protein level"/>
<gene>
    <name type="primary">Tnip1</name>
    <name type="synonym">Abin</name>
    <name type="synonym">Naf1</name>
</gene>
<feature type="chain" id="PRO_0000096692" description="TNFAIP3-interacting protein 1">
    <location>
        <begin position="1"/>
        <end position="647"/>
    </location>
</feature>
<feature type="region of interest" description="Disordered" evidence="4">
    <location>
        <begin position="61"/>
        <end position="168"/>
    </location>
</feature>
<feature type="region of interest" description="Interaction with Nef">
    <location>
        <begin position="95"/>
        <end position="425"/>
    </location>
</feature>
<feature type="region of interest" description="Required for inhibitory activity of TNF-induced NF-kappa-B activation">
    <location>
        <begin position="444"/>
        <end position="601"/>
    </location>
</feature>
<feature type="region of interest" description="Ubiquitin-binding domain (UBD)">
    <location>
        <begin position="465"/>
        <end position="523"/>
    </location>
</feature>
<feature type="region of interest" description="Disordered" evidence="4">
    <location>
        <begin position="613"/>
        <end position="647"/>
    </location>
</feature>
<feature type="coiled-coil region" evidence="3">
    <location>
        <begin position="39"/>
        <end position="72"/>
    </location>
</feature>
<feature type="coiled-coil region" evidence="3">
    <location>
        <begin position="209"/>
        <end position="270"/>
    </location>
</feature>
<feature type="coiled-coil region" evidence="3">
    <location>
        <begin position="311"/>
        <end position="551"/>
    </location>
</feature>
<feature type="short sequence motif" description="Nuclear localization signal" evidence="3">
    <location>
        <begin position="537"/>
        <end position="543"/>
    </location>
</feature>
<feature type="compositionally biased region" description="Basic and acidic residues" evidence="4">
    <location>
        <begin position="61"/>
        <end position="71"/>
    </location>
</feature>
<feature type="compositionally biased region" description="Low complexity" evidence="4">
    <location>
        <begin position="102"/>
        <end position="115"/>
    </location>
</feature>
<feature type="compositionally biased region" description="Polar residues" evidence="4">
    <location>
        <begin position="143"/>
        <end position="155"/>
    </location>
</feature>
<feature type="compositionally biased region" description="Acidic residues" evidence="4">
    <location>
        <begin position="637"/>
        <end position="647"/>
    </location>
</feature>
<feature type="modified residue" description="Phosphoserine" evidence="2">
    <location>
        <position position="77"/>
    </location>
</feature>
<feature type="modified residue" description="Phosphoserine" evidence="2">
    <location>
        <position position="297"/>
    </location>
</feature>
<feature type="modified residue" description="Phosphoserine" evidence="2">
    <location>
        <position position="416"/>
    </location>
</feature>
<feature type="modified residue" description="Phosphoserine" evidence="2">
    <location>
        <position position="455"/>
    </location>
</feature>
<feature type="modified residue" description="Phosphotyrosine" evidence="2">
    <location>
        <position position="565"/>
    </location>
</feature>
<feature type="modified residue" description="Asymmetric dimethylarginine" evidence="14">
    <location>
        <position position="584"/>
    </location>
</feature>
<feature type="modified residue" description="Asymmetric dimethylarginine; alternate" evidence="2">
    <location>
        <position position="612"/>
    </location>
</feature>
<feature type="modified residue" description="Omega-N-methylarginine; alternate" evidence="2">
    <location>
        <position position="612"/>
    </location>
</feature>
<feature type="modified residue" description="Phosphoserine" evidence="2">
    <location>
        <position position="638"/>
    </location>
</feature>
<feature type="splice variant" id="VSP_003914" description="In isoform 2." evidence="10">
    <location>
        <begin position="1"/>
        <end position="53"/>
    </location>
</feature>
<feature type="splice variant" id="VSP_003915" description="In isoform 3." evidence="11 12">
    <original>SADNDCDGPQ</original>
    <variation>PADLRLPKV</variation>
    <location>
        <begin position="638"/>
        <end position="647"/>
    </location>
</feature>
<feature type="mutagenesis site" description="Loss of inhibitory activity on TNF-induced NF-kappa-B activation; no effect on interaction with TNFAIP3." evidence="6">
    <original>QQ</original>
    <variation>EE</variation>
    <location>
        <begin position="477"/>
        <end position="478"/>
    </location>
</feature>
<feature type="mutagenesis site" description="Abolishes ubiquitin binding; loss of inhibitory activity on TNF-induced NF-kappa-B activation; no effect on interaction with TNFAIP3." evidence="6 7">
    <original>DF</original>
    <variation>NA</variation>
    <location>
        <begin position="485"/>
        <end position="486"/>
    </location>
</feature>
<feature type="mutagenesis site" description="Abolishes interaction with polyubiquitinated IRAK1." evidence="8">
    <original>D</original>
    <variation>N</variation>
    <location>
        <position position="485"/>
    </location>
</feature>
<feature type="mutagenesis site" description="Abolishes ubiquitin binding; loss of inhibitory activity on NF-kappa-B activation." evidence="7">
    <original>ER</original>
    <variation>AA</variation>
    <location>
        <begin position="489"/>
        <end position="490"/>
    </location>
</feature>
<feature type="mutagenesis site" description="Loss of inhibitory activity on TNF-induced NF-kappa-B activation; no effect on interaction with TNFAIP3." evidence="6">
    <original>RE</original>
    <variation>AQ</variation>
    <location>
        <begin position="493"/>
        <end position="494"/>
    </location>
</feature>
<feature type="sequence conflict" description="In Ref. 3; AAG42155." evidence="13" ref="3">
    <original>VQ</original>
    <variation>TR</variation>
    <location>
        <begin position="97"/>
        <end position="98"/>
    </location>
</feature>
<feature type="sequence conflict" description="In Ref. 2; AAH08186." evidence="13" ref="2">
    <original>A</original>
    <variation>V</variation>
    <location>
        <position position="308"/>
    </location>
</feature>
<feature type="sequence conflict" description="In Ref. 2; AAH08186." evidence="13" ref="2">
    <original>A</original>
    <variation>V</variation>
    <location>
        <position position="533"/>
    </location>
</feature>
<feature type="helix" evidence="15">
    <location>
        <begin position="465"/>
        <end position="529"/>
    </location>
</feature>